<name>NAC94_ARATH</name>
<proteinExistence type="evidence at protein level"/>
<accession>Q9FIW5</accession>
<gene>
    <name type="primary">ANAC094</name>
    <name type="ordered locus">At5g39820</name>
    <name type="ORF">MKM21.14</name>
</gene>
<sequence>MVLVMDDEESNNVERYDDVVLPGFRFHPTDEELVSFYLKRKVLHKSLPFDLIKKVDIYKYDPWDLPKLAAMGEKEWYFYCPRDRKYRNSTRPNRVTGGGFWKATGTDRPIYSLDSTRCIGLKKSLVFYRGRAAKGVKTDWMMHEFRLPSLSDSHHSSYPNYNNKKQHLNNNNNSKELPSNDAWAICRIFKKTNAVSSQRSIPQSWVYPTIPDNNQQSHNNTATLLASSDVLSHISTRQNFIPSPVNEPASFTESAASYFASQMLGVTYNTARNNGTGDALFLRNNGTGDALVLSNNENNYFNNLTGGLTHEVPNVRSMVMEETTGSEMSATSYSTNN</sequence>
<dbReference type="EMBL" id="AB016876">
    <property type="protein sequence ID" value="BAB11386.1"/>
    <property type="molecule type" value="Genomic_DNA"/>
</dbReference>
<dbReference type="EMBL" id="CP002688">
    <property type="protein sequence ID" value="AED94479.1"/>
    <property type="molecule type" value="Genomic_DNA"/>
</dbReference>
<dbReference type="RefSeq" id="NP_198798.2">
    <property type="nucleotide sequence ID" value="NM_123345.3"/>
</dbReference>
<dbReference type="SMR" id="Q9FIW5"/>
<dbReference type="BioGRID" id="19229">
    <property type="interactions" value="11"/>
</dbReference>
<dbReference type="FunCoup" id="Q9FIW5">
    <property type="interactions" value="3"/>
</dbReference>
<dbReference type="IntAct" id="Q9FIW5">
    <property type="interactions" value="14"/>
</dbReference>
<dbReference type="STRING" id="3702.Q9FIW5"/>
<dbReference type="PaxDb" id="3702-AT5G39820.1"/>
<dbReference type="EnsemblPlants" id="AT5G39820.1">
    <property type="protein sequence ID" value="AT5G39820.1"/>
    <property type="gene ID" value="AT5G39820"/>
</dbReference>
<dbReference type="GeneID" id="833978"/>
<dbReference type="Gramene" id="AT5G39820.1">
    <property type="protein sequence ID" value="AT5G39820.1"/>
    <property type="gene ID" value="AT5G39820"/>
</dbReference>
<dbReference type="KEGG" id="ath:AT5G39820"/>
<dbReference type="Araport" id="AT5G39820"/>
<dbReference type="TAIR" id="AT5G39820">
    <property type="gene designation" value="NAC094"/>
</dbReference>
<dbReference type="eggNOG" id="ENOG502QRAX">
    <property type="taxonomic scope" value="Eukaryota"/>
</dbReference>
<dbReference type="HOGENOM" id="CLU_829895_0_0_1"/>
<dbReference type="InParanoid" id="Q9FIW5"/>
<dbReference type="OMA" id="IPQSWVY"/>
<dbReference type="PhylomeDB" id="Q9FIW5"/>
<dbReference type="PRO" id="PR:Q9FIW5"/>
<dbReference type="Proteomes" id="UP000006548">
    <property type="component" value="Chromosome 5"/>
</dbReference>
<dbReference type="ExpressionAtlas" id="Q9FIW5">
    <property type="expression patterns" value="baseline and differential"/>
</dbReference>
<dbReference type="GO" id="GO:0005634">
    <property type="term" value="C:nucleus"/>
    <property type="evidence" value="ECO:0007669"/>
    <property type="project" value="UniProtKB-SubCell"/>
</dbReference>
<dbReference type="GO" id="GO:0003677">
    <property type="term" value="F:DNA binding"/>
    <property type="evidence" value="ECO:0007669"/>
    <property type="project" value="UniProtKB-KW"/>
</dbReference>
<dbReference type="GO" id="GO:0003700">
    <property type="term" value="F:DNA-binding transcription factor activity"/>
    <property type="evidence" value="ECO:0000250"/>
    <property type="project" value="TAIR"/>
</dbReference>
<dbReference type="FunFam" id="2.170.150.80:FF:000007">
    <property type="entry name" value="NAC domain-containing protein 35"/>
    <property type="match status" value="1"/>
</dbReference>
<dbReference type="Gene3D" id="2.170.150.80">
    <property type="entry name" value="NAC domain"/>
    <property type="match status" value="1"/>
</dbReference>
<dbReference type="InterPro" id="IPR003441">
    <property type="entry name" value="NAC-dom"/>
</dbReference>
<dbReference type="InterPro" id="IPR036093">
    <property type="entry name" value="NAC_dom_sf"/>
</dbReference>
<dbReference type="PANTHER" id="PTHR31744:SF56">
    <property type="entry name" value="NAC DOMAIN-CONTAINING PROTEIN 94-RELATED"/>
    <property type="match status" value="1"/>
</dbReference>
<dbReference type="PANTHER" id="PTHR31744">
    <property type="entry name" value="PROTEIN CUP-SHAPED COTYLEDON 2-RELATED"/>
    <property type="match status" value="1"/>
</dbReference>
<dbReference type="Pfam" id="PF02365">
    <property type="entry name" value="NAM"/>
    <property type="match status" value="1"/>
</dbReference>
<dbReference type="SUPFAM" id="SSF101941">
    <property type="entry name" value="NAC domain"/>
    <property type="match status" value="1"/>
</dbReference>
<dbReference type="PROSITE" id="PS51005">
    <property type="entry name" value="NAC"/>
    <property type="match status" value="1"/>
</dbReference>
<feature type="chain" id="PRO_0000132316" description="Putative NAC domain-containing protein 94">
    <location>
        <begin position="1"/>
        <end position="337"/>
    </location>
</feature>
<feature type="domain" description="NAC" evidence="1">
    <location>
        <begin position="20"/>
        <end position="191"/>
    </location>
</feature>
<organism>
    <name type="scientific">Arabidopsis thaliana</name>
    <name type="common">Mouse-ear cress</name>
    <dbReference type="NCBI Taxonomy" id="3702"/>
    <lineage>
        <taxon>Eukaryota</taxon>
        <taxon>Viridiplantae</taxon>
        <taxon>Streptophyta</taxon>
        <taxon>Embryophyta</taxon>
        <taxon>Tracheophyta</taxon>
        <taxon>Spermatophyta</taxon>
        <taxon>Magnoliopsida</taxon>
        <taxon>eudicotyledons</taxon>
        <taxon>Gunneridae</taxon>
        <taxon>Pentapetalae</taxon>
        <taxon>rosids</taxon>
        <taxon>malvids</taxon>
        <taxon>Brassicales</taxon>
        <taxon>Brassicaceae</taxon>
        <taxon>Camelineae</taxon>
        <taxon>Arabidopsis</taxon>
    </lineage>
</organism>
<reference key="1">
    <citation type="journal article" date="1998" name="DNA Res.">
        <title>Structural analysis of Arabidopsis thaliana chromosome 5. VII. Sequence features of the regions of 1,013,767 bp covered by sixteen physically assigned P1 and TAC clones.</title>
        <authorList>
            <person name="Nakamura Y."/>
            <person name="Sato S."/>
            <person name="Asamizu E."/>
            <person name="Kaneko T."/>
            <person name="Kotani H."/>
            <person name="Miyajima N."/>
            <person name="Tabata S."/>
        </authorList>
    </citation>
    <scope>NUCLEOTIDE SEQUENCE [LARGE SCALE GENOMIC DNA]</scope>
    <source>
        <strain>cv. Columbia</strain>
    </source>
</reference>
<reference key="2">
    <citation type="journal article" date="2017" name="Plant J.">
        <title>Araport11: a complete reannotation of the Arabidopsis thaliana reference genome.</title>
        <authorList>
            <person name="Cheng C.Y."/>
            <person name="Krishnakumar V."/>
            <person name="Chan A.P."/>
            <person name="Thibaud-Nissen F."/>
            <person name="Schobel S."/>
            <person name="Town C.D."/>
        </authorList>
    </citation>
    <scope>GENOME REANNOTATION</scope>
    <source>
        <strain>cv. Columbia</strain>
    </source>
</reference>
<reference key="3">
    <citation type="journal article" date="2003" name="DNA Res.">
        <title>Comprehensive analysis of NAC family genes in Oryza sativa and Arabidopsis thaliana.</title>
        <authorList>
            <person name="Ooka H."/>
            <person name="Satoh K."/>
            <person name="Doi K."/>
            <person name="Nagata T."/>
            <person name="Otomo Y."/>
            <person name="Murakami K."/>
            <person name="Matsubara K."/>
            <person name="Osato N."/>
            <person name="Kawai J."/>
            <person name="Carninci P."/>
            <person name="Hayashizaki Y."/>
            <person name="Suzuki K."/>
            <person name="Kojima K."/>
            <person name="Takahara Y."/>
            <person name="Yamamoto K."/>
            <person name="Kikuchi S."/>
        </authorList>
    </citation>
    <scope>GENE FAMILY</scope>
    <scope>NOMENCLATURE</scope>
</reference>
<protein>
    <recommendedName>
        <fullName>Putative NAC domain-containing protein 94</fullName>
        <shortName>ANAC094</shortName>
    </recommendedName>
</protein>
<comment type="interaction">
    <interactant intactId="EBI-25522986">
        <id>Q9FIW5</id>
    </interactant>
    <interactant intactId="EBI-1803261">
        <id>Q8S307</id>
        <label>BZR1</label>
    </interactant>
    <organismsDiffer>false</organismsDiffer>
    <experiments>3</experiments>
</comment>
<comment type="interaction">
    <interactant intactId="EBI-25522986">
        <id>Q9FIW5</id>
    </interactant>
    <interactant intactId="EBI-4446727">
        <id>Q94ID6</id>
        <label>ERF12</label>
    </interactant>
    <organismsDiffer>false</organismsDiffer>
    <experiments>3</experiments>
</comment>
<comment type="interaction">
    <interactant intactId="EBI-25522986">
        <id>Q9FIW5</id>
    </interactant>
    <interactant intactId="EBI-966009">
        <id>O80340</id>
        <label>ERF4</label>
    </interactant>
    <organismsDiffer>false</organismsDiffer>
    <experiments>3</experiments>
</comment>
<comment type="interaction">
    <interactant intactId="EBI-25522986">
        <id>Q9FIW5</id>
    </interactant>
    <interactant intactId="EBI-2000137">
        <id>Q9MAI5</id>
        <label>ERF8</label>
    </interactant>
    <organismsDiffer>false</organismsDiffer>
    <experiments>3</experiments>
</comment>
<comment type="interaction">
    <interactant intactId="EBI-25522986">
        <id>Q9FIW5</id>
    </interactant>
    <interactant intactId="EBI-4431933">
        <id>Q9FE67</id>
        <label>ERF9</label>
    </interactant>
    <organismsDiffer>false</organismsDiffer>
    <experiments>3</experiments>
</comment>
<comment type="interaction">
    <interactant intactId="EBI-25522986">
        <id>Q9FIW5</id>
    </interactant>
    <interactant intactId="EBI-632243">
        <id>P93830</id>
        <label>IAA17</label>
    </interactant>
    <organismsDiffer>false</organismsDiffer>
    <experiments>3</experiments>
</comment>
<comment type="interaction">
    <interactant intactId="EBI-25522986">
        <id>Q9FIW5</id>
    </interactant>
    <interactant intactId="EBI-632272">
        <id>O24410</id>
        <label>IAA20</label>
    </interactant>
    <organismsDiffer>false</organismsDiffer>
    <experiments>3</experiments>
</comment>
<comment type="interaction">
    <interactant intactId="EBI-25522986">
        <id>Q9FIW5</id>
    </interactant>
    <interactant intactId="EBI-3946459">
        <id>Q9C5X0</id>
        <label>IAA34</label>
    </interactant>
    <organismsDiffer>false</organismsDiffer>
    <experiments>3</experiments>
</comment>
<comment type="interaction">
    <interactant intactId="EBI-25522986">
        <id>Q9FIW5</id>
    </interactant>
    <interactant intactId="EBI-25511270">
        <id>Q9FX36</id>
        <label>MYB54</label>
    </interactant>
    <organismsDiffer>false</organismsDiffer>
    <experiments>3</experiments>
</comment>
<comment type="interaction">
    <interactant intactId="EBI-25522986">
        <id>Q9FIW5</id>
    </interactant>
    <interactant intactId="EBI-1388539">
        <id>Q9LMA8</id>
        <label>TIFY10A</label>
    </interactant>
    <organismsDiffer>false</organismsDiffer>
    <experiments>3</experiments>
</comment>
<comment type="interaction">
    <interactant intactId="EBI-25522986">
        <id>Q9FIW5</id>
    </interactant>
    <interactant intactId="EBI-1792583">
        <id>Q8W4J8</id>
        <label>TIFY7</label>
    </interactant>
    <organismsDiffer>false</organismsDiffer>
    <experiments>3</experiments>
</comment>
<comment type="subcellular location">
    <subcellularLocation>
        <location evidence="1">Nucleus</location>
    </subcellularLocation>
</comment>
<comment type="domain">
    <text>The NAC domain includes a DNA-binding domain and a dimerization domain.</text>
</comment>
<evidence type="ECO:0000255" key="1">
    <source>
        <dbReference type="PROSITE-ProRule" id="PRU00353"/>
    </source>
</evidence>
<keyword id="KW-0238">DNA-binding</keyword>
<keyword id="KW-0539">Nucleus</keyword>
<keyword id="KW-1185">Reference proteome</keyword>
<keyword id="KW-0804">Transcription</keyword>
<keyword id="KW-0805">Transcription regulation</keyword>